<keyword id="KW-0058">Aromatic hydrocarbons catabolism</keyword>
<keyword id="KW-0520">NAD</keyword>
<keyword id="KW-0560">Oxidoreductase</keyword>
<evidence type="ECO:0000255" key="1">
    <source>
        <dbReference type="HAMAP-Rule" id="MF_01657"/>
    </source>
</evidence>
<dbReference type="EC" id="1.2.1.10" evidence="1"/>
<dbReference type="EMBL" id="AP009240">
    <property type="protein sequence ID" value="BAG75900.1"/>
    <property type="molecule type" value="Genomic_DNA"/>
</dbReference>
<dbReference type="RefSeq" id="WP_000044314.1">
    <property type="nucleotide sequence ID" value="NC_011415.1"/>
</dbReference>
<dbReference type="SMR" id="B6HZX7"/>
<dbReference type="GeneID" id="93777104"/>
<dbReference type="KEGG" id="ecy:ECSE_0376"/>
<dbReference type="HOGENOM" id="CLU_062208_0_0_6"/>
<dbReference type="UniPathway" id="UPA00714"/>
<dbReference type="Proteomes" id="UP000008199">
    <property type="component" value="Chromosome"/>
</dbReference>
<dbReference type="GO" id="GO:0008774">
    <property type="term" value="F:acetaldehyde dehydrogenase (acetylating) activity"/>
    <property type="evidence" value="ECO:0007669"/>
    <property type="project" value="UniProtKB-UniRule"/>
</dbReference>
<dbReference type="GO" id="GO:0051287">
    <property type="term" value="F:NAD binding"/>
    <property type="evidence" value="ECO:0007669"/>
    <property type="project" value="UniProtKB-UniRule"/>
</dbReference>
<dbReference type="GO" id="GO:0019380">
    <property type="term" value="P:3-phenylpropionate catabolic process"/>
    <property type="evidence" value="ECO:0007669"/>
    <property type="project" value="UniProtKB-UniRule"/>
</dbReference>
<dbReference type="CDD" id="cd23933">
    <property type="entry name" value="ALDH_C"/>
    <property type="match status" value="1"/>
</dbReference>
<dbReference type="FunFam" id="3.30.360.10:FF:000021">
    <property type="entry name" value="Acetaldehyde dehydrogenase"/>
    <property type="match status" value="1"/>
</dbReference>
<dbReference type="Gene3D" id="3.30.360.10">
    <property type="entry name" value="Dihydrodipicolinate Reductase, domain 2"/>
    <property type="match status" value="1"/>
</dbReference>
<dbReference type="Gene3D" id="3.40.50.720">
    <property type="entry name" value="NAD(P)-binding Rossmann-like Domain"/>
    <property type="match status" value="1"/>
</dbReference>
<dbReference type="HAMAP" id="MF_01657">
    <property type="entry name" value="Ac_ald_DH_ac"/>
    <property type="match status" value="1"/>
</dbReference>
<dbReference type="InterPro" id="IPR003361">
    <property type="entry name" value="Acetaldehyde_dehydrogenase"/>
</dbReference>
<dbReference type="InterPro" id="IPR015426">
    <property type="entry name" value="Acetylaldehyde_DH_C"/>
</dbReference>
<dbReference type="InterPro" id="IPR036291">
    <property type="entry name" value="NAD(P)-bd_dom_sf"/>
</dbReference>
<dbReference type="InterPro" id="IPR000534">
    <property type="entry name" value="Semialdehyde_DH_NAD-bd"/>
</dbReference>
<dbReference type="NCBIfam" id="TIGR03215">
    <property type="entry name" value="ac_ald_DH_ac"/>
    <property type="match status" value="1"/>
</dbReference>
<dbReference type="NCBIfam" id="NF006157">
    <property type="entry name" value="PRK08300.1"/>
    <property type="match status" value="1"/>
</dbReference>
<dbReference type="Pfam" id="PF09290">
    <property type="entry name" value="AcetDehyd-dimer"/>
    <property type="match status" value="1"/>
</dbReference>
<dbReference type="Pfam" id="PF01118">
    <property type="entry name" value="Semialdhyde_dh"/>
    <property type="match status" value="1"/>
</dbReference>
<dbReference type="PIRSF" id="PIRSF015689">
    <property type="entry name" value="Actaldh_dh_actl"/>
    <property type="match status" value="1"/>
</dbReference>
<dbReference type="SMART" id="SM00859">
    <property type="entry name" value="Semialdhyde_dh"/>
    <property type="match status" value="1"/>
</dbReference>
<dbReference type="SUPFAM" id="SSF55347">
    <property type="entry name" value="Glyceraldehyde-3-phosphate dehydrogenase-like, C-terminal domain"/>
    <property type="match status" value="1"/>
</dbReference>
<dbReference type="SUPFAM" id="SSF51735">
    <property type="entry name" value="NAD(P)-binding Rossmann-fold domains"/>
    <property type="match status" value="1"/>
</dbReference>
<organism>
    <name type="scientific">Escherichia coli (strain SE11)</name>
    <dbReference type="NCBI Taxonomy" id="409438"/>
    <lineage>
        <taxon>Bacteria</taxon>
        <taxon>Pseudomonadati</taxon>
        <taxon>Pseudomonadota</taxon>
        <taxon>Gammaproteobacteria</taxon>
        <taxon>Enterobacterales</taxon>
        <taxon>Enterobacteriaceae</taxon>
        <taxon>Escherichia</taxon>
    </lineage>
</organism>
<gene>
    <name evidence="1" type="primary">mhpF</name>
    <name type="ordered locus">ECSE_0376</name>
</gene>
<comment type="function">
    <text evidence="1">Catalyzes the conversion of acetaldehyde to acetyl-CoA, using NAD(+) and coenzyme A. Is the final enzyme in the meta-cleavage pathway for the degradation of aromatic compounds.</text>
</comment>
<comment type="catalytic activity">
    <reaction evidence="1">
        <text>acetaldehyde + NAD(+) + CoA = acetyl-CoA + NADH + H(+)</text>
        <dbReference type="Rhea" id="RHEA:23288"/>
        <dbReference type="ChEBI" id="CHEBI:15343"/>
        <dbReference type="ChEBI" id="CHEBI:15378"/>
        <dbReference type="ChEBI" id="CHEBI:57287"/>
        <dbReference type="ChEBI" id="CHEBI:57288"/>
        <dbReference type="ChEBI" id="CHEBI:57540"/>
        <dbReference type="ChEBI" id="CHEBI:57945"/>
        <dbReference type="EC" id="1.2.1.10"/>
    </reaction>
</comment>
<comment type="pathway">
    <text evidence="1">Aromatic compound metabolism; 3-phenylpropanoate degradation.</text>
</comment>
<comment type="subunit">
    <text evidence="1">Interacts with MhpE.</text>
</comment>
<comment type="similarity">
    <text evidence="1">Belongs to the acetaldehyde dehydrogenase family.</text>
</comment>
<proteinExistence type="inferred from homology"/>
<reference key="1">
    <citation type="journal article" date="2008" name="DNA Res.">
        <title>Complete genome sequence and comparative analysis of the wild-type commensal Escherichia coli strain SE11 isolated from a healthy adult.</title>
        <authorList>
            <person name="Oshima K."/>
            <person name="Toh H."/>
            <person name="Ogura Y."/>
            <person name="Sasamoto H."/>
            <person name="Morita H."/>
            <person name="Park S.-H."/>
            <person name="Ooka T."/>
            <person name="Iyoda S."/>
            <person name="Taylor T.D."/>
            <person name="Hayashi T."/>
            <person name="Itoh K."/>
            <person name="Hattori M."/>
        </authorList>
    </citation>
    <scope>NUCLEOTIDE SEQUENCE [LARGE SCALE GENOMIC DNA]</scope>
    <source>
        <strain>SE11</strain>
    </source>
</reference>
<sequence length="316" mass="33442">MSKRKVAIIGSGNIGTDLMIKILRHGQHLEMAVMVGIDPQSDGLARARRMGVATTHEGVIGLMNMPEFADIDIVFDATSAGAHVKNDAALREAKPDIRLIDLTPAAIGPYCVPVVNLEANVDQLNVNMVTCGGQATIPMVAAVSRVARVHYAEIIASIASKSAGPGTRANIDEFTETTSRAIEVVGGAAKGKAIIVLNPAEPPLMMRDTVYVLSDEASQDDIEASINEMAEAVQAYVPGYRLKQRVQFEVIPQDKPVNLPGVGQFSGLKTAVWLEVEGAAHYLPAYAGNLDIMTSSALATAEKMAQSLARKAGEAA</sequence>
<accession>B6HZX7</accession>
<name>ACDH_ECOSE</name>
<feature type="chain" id="PRO_1000187035" description="Acetaldehyde dehydrogenase">
    <location>
        <begin position="1"/>
        <end position="316"/>
    </location>
</feature>
<feature type="active site" description="Acyl-thioester intermediate" evidence="1">
    <location>
        <position position="131"/>
    </location>
</feature>
<feature type="binding site" evidence="1">
    <location>
        <begin position="11"/>
        <end position="14"/>
    </location>
    <ligand>
        <name>NAD(+)</name>
        <dbReference type="ChEBI" id="CHEBI:57540"/>
    </ligand>
</feature>
<feature type="binding site" evidence="1">
    <location>
        <begin position="162"/>
        <end position="170"/>
    </location>
    <ligand>
        <name>NAD(+)</name>
        <dbReference type="ChEBI" id="CHEBI:57540"/>
    </ligand>
</feature>
<feature type="binding site" evidence="1">
    <location>
        <position position="289"/>
    </location>
    <ligand>
        <name>NAD(+)</name>
        <dbReference type="ChEBI" id="CHEBI:57540"/>
    </ligand>
</feature>
<protein>
    <recommendedName>
        <fullName evidence="1">Acetaldehyde dehydrogenase</fullName>
        <ecNumber evidence="1">1.2.1.10</ecNumber>
    </recommendedName>
    <alternativeName>
        <fullName evidence="1">Acetaldehyde dehydrogenase [acetylating]</fullName>
    </alternativeName>
</protein>